<evidence type="ECO:0000255" key="1">
    <source>
        <dbReference type="HAMAP-Rule" id="MF_00617"/>
    </source>
</evidence>
<keyword id="KW-0963">Cytoplasm</keyword>
<keyword id="KW-0378">Hydrolase</keyword>
<keyword id="KW-0460">Magnesium</keyword>
<keyword id="KW-0479">Metal-binding</keyword>
<sequence>MFSIQQPLLVFSDLDGTLLDSHSYDWQPAAPWLSRLREANVPVILCSSKTSAEMLYLQKTLGLQGLPLIAENGAVIQLAEQWQDIDGFPRIISGISHGEISQVLNTLREKEHFKFTTFDDVDDATIAEWTGLSRSQAALTQLHEASVTLIWRDSDERMAQFTARLNELGLQFMQGARFWHVLDASAGKDQAANWIIATYQQLSGKRPTTLGLGDGPNDAPLLEVMDYAVIVKGLNREGVHLHDEDPTRVWRTQREGPEGWREGLDHFFSAR</sequence>
<gene>
    <name type="ordered locus">EcolC_1688</name>
</gene>
<feature type="chain" id="PRO_1000082582" description="Mannosyl-3-phosphoglycerate phosphatase">
    <location>
        <begin position="1"/>
        <end position="271"/>
    </location>
</feature>
<feature type="active site" description="Nucleophile" evidence="1">
    <location>
        <position position="13"/>
    </location>
</feature>
<feature type="binding site" evidence="1">
    <location>
        <position position="13"/>
    </location>
    <ligand>
        <name>Mg(2+)</name>
        <dbReference type="ChEBI" id="CHEBI:18420"/>
    </ligand>
</feature>
<feature type="binding site" evidence="1">
    <location>
        <position position="15"/>
    </location>
    <ligand>
        <name>Mg(2+)</name>
        <dbReference type="ChEBI" id="CHEBI:18420"/>
    </ligand>
</feature>
<feature type="binding site" evidence="1">
    <location>
        <position position="214"/>
    </location>
    <ligand>
        <name>Mg(2+)</name>
        <dbReference type="ChEBI" id="CHEBI:18420"/>
    </ligand>
</feature>
<dbReference type="EC" id="3.1.3.70" evidence="1"/>
<dbReference type="EMBL" id="CP000946">
    <property type="protein sequence ID" value="ACA77340.1"/>
    <property type="molecule type" value="Genomic_DNA"/>
</dbReference>
<dbReference type="RefSeq" id="WP_000491501.1">
    <property type="nucleotide sequence ID" value="NZ_MTFT01000011.1"/>
</dbReference>
<dbReference type="SMR" id="B1IZV5"/>
<dbReference type="KEGG" id="ecl:EcolC_1688"/>
<dbReference type="HOGENOM" id="CLU_063016_1_0_6"/>
<dbReference type="GO" id="GO:0005829">
    <property type="term" value="C:cytosol"/>
    <property type="evidence" value="ECO:0007669"/>
    <property type="project" value="TreeGrafter"/>
</dbReference>
<dbReference type="GO" id="GO:0000287">
    <property type="term" value="F:magnesium ion binding"/>
    <property type="evidence" value="ECO:0007669"/>
    <property type="project" value="UniProtKB-ARBA"/>
</dbReference>
<dbReference type="GO" id="GO:0050531">
    <property type="term" value="F:mannosyl-3-phosphoglycerate phosphatase activity"/>
    <property type="evidence" value="ECO:0007669"/>
    <property type="project" value="UniProtKB-UniRule"/>
</dbReference>
<dbReference type="GO" id="GO:0051479">
    <property type="term" value="P:mannosylglycerate biosynthetic process"/>
    <property type="evidence" value="ECO:0007669"/>
    <property type="project" value="InterPro"/>
</dbReference>
<dbReference type="CDD" id="cd07507">
    <property type="entry name" value="HAD_Pase"/>
    <property type="match status" value="1"/>
</dbReference>
<dbReference type="Gene3D" id="3.40.50.1000">
    <property type="entry name" value="HAD superfamily/HAD-like"/>
    <property type="match status" value="1"/>
</dbReference>
<dbReference type="Gene3D" id="3.30.980.20">
    <property type="entry name" value="Putative mannosyl-3-phosphoglycerate phosphatase, domain 2"/>
    <property type="match status" value="1"/>
</dbReference>
<dbReference type="HAMAP" id="MF_00617">
    <property type="entry name" value="MPGP_rel"/>
    <property type="match status" value="1"/>
</dbReference>
<dbReference type="InterPro" id="IPR036412">
    <property type="entry name" value="HAD-like_sf"/>
</dbReference>
<dbReference type="InterPro" id="IPR006381">
    <property type="entry name" value="HAD-SF-IIB-MPGP"/>
</dbReference>
<dbReference type="InterPro" id="IPR006379">
    <property type="entry name" value="HAD-SF_hydro_IIB"/>
</dbReference>
<dbReference type="InterPro" id="IPR023214">
    <property type="entry name" value="HAD_sf"/>
</dbReference>
<dbReference type="InterPro" id="IPR012815">
    <property type="entry name" value="MPG_Pase"/>
</dbReference>
<dbReference type="NCBIfam" id="TIGR01484">
    <property type="entry name" value="HAD-SF-IIB"/>
    <property type="match status" value="1"/>
</dbReference>
<dbReference type="NCBIfam" id="TIGR01486">
    <property type="entry name" value="HAD-SF-IIB-MPGP"/>
    <property type="match status" value="1"/>
</dbReference>
<dbReference type="NCBIfam" id="TIGR02463">
    <property type="entry name" value="MPGP_rel"/>
    <property type="match status" value="1"/>
</dbReference>
<dbReference type="NCBIfam" id="NF002976">
    <property type="entry name" value="PRK03669.1"/>
    <property type="match status" value="1"/>
</dbReference>
<dbReference type="PANTHER" id="PTHR10000:SF8">
    <property type="entry name" value="HAD SUPERFAMILY HYDROLASE-LIKE, TYPE 3"/>
    <property type="match status" value="1"/>
</dbReference>
<dbReference type="PANTHER" id="PTHR10000">
    <property type="entry name" value="PHOSPHOSERINE PHOSPHATASE"/>
    <property type="match status" value="1"/>
</dbReference>
<dbReference type="Pfam" id="PF08282">
    <property type="entry name" value="Hydrolase_3"/>
    <property type="match status" value="1"/>
</dbReference>
<dbReference type="SFLD" id="SFLDG01142">
    <property type="entry name" value="C2.B.2:_Mannosyl-3-phosphoglyc"/>
    <property type="match status" value="1"/>
</dbReference>
<dbReference type="SFLD" id="SFLDS00003">
    <property type="entry name" value="Haloacid_Dehalogenase"/>
    <property type="match status" value="1"/>
</dbReference>
<dbReference type="SUPFAM" id="SSF56784">
    <property type="entry name" value="HAD-like"/>
    <property type="match status" value="1"/>
</dbReference>
<reference key="1">
    <citation type="submission" date="2008-02" db="EMBL/GenBank/DDBJ databases">
        <title>Complete sequence of Escherichia coli C str. ATCC 8739.</title>
        <authorList>
            <person name="Copeland A."/>
            <person name="Lucas S."/>
            <person name="Lapidus A."/>
            <person name="Glavina del Rio T."/>
            <person name="Dalin E."/>
            <person name="Tice H."/>
            <person name="Bruce D."/>
            <person name="Goodwin L."/>
            <person name="Pitluck S."/>
            <person name="Kiss H."/>
            <person name="Brettin T."/>
            <person name="Detter J.C."/>
            <person name="Han C."/>
            <person name="Kuske C.R."/>
            <person name="Schmutz J."/>
            <person name="Larimer F."/>
            <person name="Land M."/>
            <person name="Hauser L."/>
            <person name="Kyrpides N."/>
            <person name="Mikhailova N."/>
            <person name="Ingram L."/>
            <person name="Richardson P."/>
        </authorList>
    </citation>
    <scope>NUCLEOTIDE SEQUENCE [LARGE SCALE GENOMIC DNA]</scope>
    <source>
        <strain>ATCC 8739 / DSM 1576 / NBRC 3972 / NCIMB 8545 / WDCM 00012 / Crooks</strain>
    </source>
</reference>
<proteinExistence type="inferred from homology"/>
<organism>
    <name type="scientific">Escherichia coli (strain ATCC 8739 / DSM 1576 / NBRC 3972 / NCIMB 8545 / WDCM 00012 / Crooks)</name>
    <dbReference type="NCBI Taxonomy" id="481805"/>
    <lineage>
        <taxon>Bacteria</taxon>
        <taxon>Pseudomonadati</taxon>
        <taxon>Pseudomonadota</taxon>
        <taxon>Gammaproteobacteria</taxon>
        <taxon>Enterobacterales</taxon>
        <taxon>Enterobacteriaceae</taxon>
        <taxon>Escherichia</taxon>
    </lineage>
</organism>
<name>MPGP_ECOLC</name>
<protein>
    <recommendedName>
        <fullName evidence="1">Mannosyl-3-phosphoglycerate phosphatase</fullName>
        <shortName evidence="1">MPGP</shortName>
        <ecNumber evidence="1">3.1.3.70</ecNumber>
    </recommendedName>
</protein>
<comment type="catalytic activity">
    <reaction evidence="1">
        <text>2-O-(alpha-D-mannosyl)-3-phosphoglycerate + H2O = (2R)-2-O-(alpha-D-mannosyl)-glycerate + phosphate</text>
        <dbReference type="Rhea" id="RHEA:19309"/>
        <dbReference type="ChEBI" id="CHEBI:15377"/>
        <dbReference type="ChEBI" id="CHEBI:43474"/>
        <dbReference type="ChEBI" id="CHEBI:57541"/>
        <dbReference type="ChEBI" id="CHEBI:57744"/>
        <dbReference type="EC" id="3.1.3.70"/>
    </reaction>
</comment>
<comment type="cofactor">
    <cofactor evidence="1">
        <name>Mg(2+)</name>
        <dbReference type="ChEBI" id="CHEBI:18420"/>
    </cofactor>
</comment>
<comment type="subcellular location">
    <subcellularLocation>
        <location evidence="1">Cytoplasm</location>
    </subcellularLocation>
</comment>
<comment type="similarity">
    <text evidence="1">Belongs to the HAD-like hydrolase superfamily. MPGP family.</text>
</comment>
<accession>B1IZV5</accession>